<organism>
    <name type="scientific">Escherichia coli (strain K12)</name>
    <dbReference type="NCBI Taxonomy" id="83333"/>
    <lineage>
        <taxon>Bacteria</taxon>
        <taxon>Pseudomonadati</taxon>
        <taxon>Pseudomonadota</taxon>
        <taxon>Gammaproteobacteria</taxon>
        <taxon>Enterobacterales</taxon>
        <taxon>Enterobacteriaceae</taxon>
        <taxon>Escherichia</taxon>
    </lineage>
</organism>
<dbReference type="EMBL" id="U00096">
    <property type="protein sequence ID" value="AHA50631.1"/>
    <property type="molecule type" value="Genomic_DNA"/>
</dbReference>
<dbReference type="EMBL" id="AP009048">
    <property type="status" value="NOT_ANNOTATED_CDS"/>
    <property type="molecule type" value="Genomic_DNA"/>
</dbReference>
<dbReference type="RefSeq" id="WP_001001761.1">
    <property type="nucleotide sequence ID" value="NZ_STEB01000019.1"/>
</dbReference>
<dbReference type="RefSeq" id="YP_009029995.1">
    <property type="nucleotide sequence ID" value="NC_000913.3"/>
</dbReference>
<dbReference type="SMR" id="P0DKB3"/>
<dbReference type="FunCoup" id="P0DKB3">
    <property type="interactions" value="1"/>
</dbReference>
<dbReference type="STRING" id="511145.b4705"/>
<dbReference type="PaxDb" id="511145-b4705"/>
<dbReference type="EnsemblBacteria" id="AHA50631">
    <property type="protein sequence ID" value="AHA50631"/>
    <property type="gene ID" value="b4705"/>
</dbReference>
<dbReference type="GeneID" id="14678509"/>
<dbReference type="GeneID" id="75204930"/>
<dbReference type="KEGG" id="eco:b4705"/>
<dbReference type="KEGG" id="ecoc:C3026_05135"/>
<dbReference type="PATRIC" id="fig|1411691.4.peg.1462"/>
<dbReference type="eggNOG" id="ENOG5033AZ9">
    <property type="taxonomic scope" value="Bacteria"/>
</dbReference>
<dbReference type="InParanoid" id="P0DKB3"/>
<dbReference type="OrthoDB" id="6563017at2"/>
<dbReference type="BioCyc" id="EcoCyc:MONOMER0-4216"/>
<dbReference type="PRO" id="PR:P0DKB3"/>
<dbReference type="Proteomes" id="UP000000625">
    <property type="component" value="Chromosome"/>
</dbReference>
<dbReference type="GO" id="GO:0005737">
    <property type="term" value="C:cytoplasm"/>
    <property type="evidence" value="ECO:0007669"/>
    <property type="project" value="UniProtKB-SubCell"/>
</dbReference>
<dbReference type="GO" id="GO:0071287">
    <property type="term" value="P:cellular response to manganese ion"/>
    <property type="evidence" value="ECO:0000270"/>
    <property type="project" value="EcoCyc"/>
</dbReference>
<dbReference type="GO" id="GO:0030026">
    <property type="term" value="P:intracellular manganese ion homeostasis"/>
    <property type="evidence" value="ECO:0000315"/>
    <property type="project" value="EcoCyc"/>
</dbReference>
<dbReference type="InterPro" id="IPR047782">
    <property type="entry name" value="MntS"/>
</dbReference>
<dbReference type="NCBIfam" id="NF033226">
    <property type="entry name" value="small_MntS"/>
    <property type="match status" value="1"/>
</dbReference>
<reference key="1">
    <citation type="journal article" date="1997" name="Science">
        <title>The complete genome sequence of Escherichia coli K-12.</title>
        <authorList>
            <person name="Blattner F.R."/>
            <person name="Plunkett G. III"/>
            <person name="Bloch C.A."/>
            <person name="Perna N.T."/>
            <person name="Burland V."/>
            <person name="Riley M."/>
            <person name="Collado-Vides J."/>
            <person name="Glasner J.D."/>
            <person name="Rode C.K."/>
            <person name="Mayhew G.F."/>
            <person name="Gregor J."/>
            <person name="Davis N.W."/>
            <person name="Kirkpatrick H.A."/>
            <person name="Goeden M.A."/>
            <person name="Rose D.J."/>
            <person name="Mau B."/>
            <person name="Shao Y."/>
        </authorList>
    </citation>
    <scope>NUCLEOTIDE SEQUENCE [LARGE SCALE GENOMIC DNA]</scope>
    <source>
        <strain>K12 / MG1655 / ATCC 47076</strain>
    </source>
</reference>
<reference key="2">
    <citation type="journal article" date="2006" name="Mol. Syst. Biol.">
        <title>Highly accurate genome sequences of Escherichia coli K-12 strains MG1655 and W3110.</title>
        <authorList>
            <person name="Hayashi K."/>
            <person name="Morooka N."/>
            <person name="Yamamoto Y."/>
            <person name="Fujita K."/>
            <person name="Isono K."/>
            <person name="Choi S."/>
            <person name="Ohtsubo E."/>
            <person name="Baba T."/>
            <person name="Wanner B.L."/>
            <person name="Mori H."/>
            <person name="Horiuchi T."/>
        </authorList>
    </citation>
    <scope>NUCLEOTIDE SEQUENCE [LARGE SCALE GENOMIC DNA]</scope>
    <source>
        <strain>K12 / W3110 / ATCC 27325 / DSM 5911</strain>
    </source>
</reference>
<reference key="3">
    <citation type="journal article" date="2011" name="J. Bacteriol.">
        <title>The Escherichia coli MntR miniregulon includes genes encoding a small protein and an efflux pump required for manganese homeostasis.</title>
        <authorList>
            <person name="Waters L.S."/>
            <person name="Sandoval M."/>
            <person name="Storz G."/>
        </authorList>
    </citation>
    <scope>IDENTIFICATION</scope>
    <scope>FUNCTION IN MANGANESE HOMEOSTASIS</scope>
    <scope>INDUCTION</scope>
    <scope>GENE NAME</scope>
</reference>
<reference key="4">
    <citation type="journal article" date="2011" name="J. Biol. Chem.">
        <title>Membrane localization of small proteins in Escherichia coli.</title>
        <authorList>
            <person name="Fontaine F."/>
            <person name="Fuchs R.T."/>
            <person name="Storz G."/>
        </authorList>
    </citation>
    <scope>SUBCELLULAR LOCATION</scope>
    <source>
        <strain>K12 / MG1655 / ATCC 47076</strain>
    </source>
</reference>
<gene>
    <name type="primary">mntS</name>
    <name type="synonym">rybA</name>
    <name type="ordered locus">b4705</name>
    <name type="ordered locus">JW0800.1</name>
</gene>
<accession>P0DKB3</accession>
<accession>U6BY08</accession>
<feature type="chain" id="PRO_0000419287" description="Small protein MntS">
    <location>
        <begin position="1"/>
        <end position="42"/>
    </location>
</feature>
<name>MNTS_ECOLI</name>
<proteinExistence type="evidence at protein level"/>
<protein>
    <recommendedName>
        <fullName>Small protein MntS</fullName>
    </recommendedName>
</protein>
<comment type="function">
    <text evidence="2">Required for repression of mntH by MntR. May function as a chaperone that makes manganese more available by delivering it to the necessary cellular locations when manganese is limiting.</text>
</comment>
<comment type="subcellular location">
    <subcellularLocation>
        <location evidence="1">Cytoplasm</location>
    </subcellularLocation>
    <text>May be loosely associated with the inner membrane.</text>
</comment>
<comment type="induction">
    <text evidence="2">Repressed by MntR in response to manganese.</text>
</comment>
<comment type="caution">
    <text evidence="3">MntS mRNA was originally thought to be an sRNA.</text>
</comment>
<evidence type="ECO:0000269" key="1">
    <source>
    </source>
</evidence>
<evidence type="ECO:0000269" key="2">
    <source>
    </source>
</evidence>
<evidence type="ECO:0000305" key="3"/>
<sequence length="42" mass="5031">MNEFKRCMRVFSHSPFKVRLMLLSMLCDMVNNKPQQDKPSDK</sequence>
<keyword id="KW-0963">Cytoplasm</keyword>
<keyword id="KW-1185">Reference proteome</keyword>